<proteinExistence type="evidence at transcript level"/>
<dbReference type="EMBL" id="AC009325">
    <property type="protein sequence ID" value="AAF01540.1"/>
    <property type="status" value="ALT_SEQ"/>
    <property type="molecule type" value="Genomic_DNA"/>
</dbReference>
<dbReference type="EMBL" id="CP002686">
    <property type="protein sequence ID" value="AEE73687.1"/>
    <property type="molecule type" value="Genomic_DNA"/>
</dbReference>
<dbReference type="EMBL" id="BT002061">
    <property type="protein sequence ID" value="AAN72072.1"/>
    <property type="molecule type" value="mRNA"/>
</dbReference>
<dbReference type="EMBL" id="BT008466">
    <property type="protein sequence ID" value="AAP37825.1"/>
    <property type="molecule type" value="mRNA"/>
</dbReference>
<dbReference type="EMBL" id="AY084826">
    <property type="protein sequence ID" value="AAM61391.1"/>
    <property type="molecule type" value="mRNA"/>
</dbReference>
<dbReference type="RefSeq" id="NP_566142.1">
    <property type="nucleotide sequence ID" value="NM_111021.4"/>
</dbReference>
<dbReference type="SMR" id="Q8H0T6"/>
<dbReference type="BioGRID" id="6447">
    <property type="interactions" value="42"/>
</dbReference>
<dbReference type="FunCoup" id="Q8H0T6">
    <property type="interactions" value="3035"/>
</dbReference>
<dbReference type="IntAct" id="Q8H0T6">
    <property type="interactions" value="42"/>
</dbReference>
<dbReference type="STRING" id="3702.Q8H0T6"/>
<dbReference type="PaxDb" id="3702-AT3G01550.1"/>
<dbReference type="ProteomicsDB" id="234863"/>
<dbReference type="EnsemblPlants" id="AT3G01550.1">
    <property type="protein sequence ID" value="AT3G01550.1"/>
    <property type="gene ID" value="AT3G01550"/>
</dbReference>
<dbReference type="GeneID" id="821114"/>
<dbReference type="Gramene" id="AT3G01550.1">
    <property type="protein sequence ID" value="AT3G01550.1"/>
    <property type="gene ID" value="AT3G01550"/>
</dbReference>
<dbReference type="KEGG" id="ath:AT3G01550"/>
<dbReference type="Araport" id="AT3G01550"/>
<dbReference type="TAIR" id="AT3G01550">
    <property type="gene designation" value="PPT2"/>
</dbReference>
<dbReference type="eggNOG" id="KOG1441">
    <property type="taxonomic scope" value="Eukaryota"/>
</dbReference>
<dbReference type="HOGENOM" id="CLU_019048_0_0_1"/>
<dbReference type="InParanoid" id="Q8H0T6"/>
<dbReference type="OMA" id="MFATWYL"/>
<dbReference type="OrthoDB" id="6418713at2759"/>
<dbReference type="PhylomeDB" id="Q8H0T6"/>
<dbReference type="PRO" id="PR:Q8H0T6"/>
<dbReference type="Proteomes" id="UP000006548">
    <property type="component" value="Chromosome 3"/>
</dbReference>
<dbReference type="ExpressionAtlas" id="Q8H0T6">
    <property type="expression patterns" value="baseline and differential"/>
</dbReference>
<dbReference type="GO" id="GO:0031969">
    <property type="term" value="C:chloroplast membrane"/>
    <property type="evidence" value="ECO:0007669"/>
    <property type="project" value="UniProtKB-SubCell"/>
</dbReference>
<dbReference type="GO" id="GO:0015121">
    <property type="term" value="F:phosphoenolpyruvate:phosphate antiporter activity"/>
    <property type="evidence" value="ECO:0000314"/>
    <property type="project" value="UniProtKB"/>
</dbReference>
<dbReference type="GO" id="GO:0015120">
    <property type="term" value="F:phosphoglycerate transmembrane transporter activity"/>
    <property type="evidence" value="ECO:0000314"/>
    <property type="project" value="UniProtKB"/>
</dbReference>
<dbReference type="GO" id="GO:0015714">
    <property type="term" value="P:phosphoenolpyruvate transport"/>
    <property type="evidence" value="ECO:0000314"/>
    <property type="project" value="UniProtKB"/>
</dbReference>
<dbReference type="GO" id="GO:0015713">
    <property type="term" value="P:phosphoglycerate transmembrane transport"/>
    <property type="evidence" value="ECO:0000314"/>
    <property type="project" value="UniProtKB"/>
</dbReference>
<dbReference type="InterPro" id="IPR004853">
    <property type="entry name" value="Sugar_P_trans_dom"/>
</dbReference>
<dbReference type="InterPro" id="IPR004696">
    <property type="entry name" value="Tpt_PEP_transl"/>
</dbReference>
<dbReference type="InterPro" id="IPR050186">
    <property type="entry name" value="TPT_transporter"/>
</dbReference>
<dbReference type="NCBIfam" id="TIGR00817">
    <property type="entry name" value="tpt"/>
    <property type="match status" value="1"/>
</dbReference>
<dbReference type="PANTHER" id="PTHR11132">
    <property type="entry name" value="SOLUTE CARRIER FAMILY 35"/>
    <property type="match status" value="1"/>
</dbReference>
<dbReference type="Pfam" id="PF03151">
    <property type="entry name" value="TPT"/>
    <property type="match status" value="1"/>
</dbReference>
<dbReference type="SUPFAM" id="SSF103481">
    <property type="entry name" value="Multidrug resistance efflux transporter EmrE"/>
    <property type="match status" value="2"/>
</dbReference>
<gene>
    <name type="primary">PPT2</name>
    <name type="ordered locus">At3g01550</name>
    <name type="ORF">F4P13.10</name>
</gene>
<sequence length="383" mass="42054">MFALTFLNPNPRLPSPLFLAKSTPESALSRRSRAFSSSNSYPWRPNLRFNGFKLKSATVPENVEGGDLESGSLVKGLKLGGMFGVWYLLNIYYNIFNKQVLRVYPYPATVTAFQLGCGTLMIAIMWLLKLHPRPKFSPSQFTVIVQLAVAHTLGNLLTNVSLGRVNVSFTHTIKAMEPFFTVLLSVLLLGEWPSLWIVCSLLPIVAGVSLASFTEASFNWIGFCSAMASNVTNQSRNVLSKKFMVGKDALDNINLFSIITIISFILLVPLAILIDGFKVTPSHLQVATSQGLSVKEFCIMSLLAGVCLHSYQQVSYMILEMVSPVTHSVGNCVKRVVVITSSILFFKTPVSPLNSIGTATALAGVYLYSRAKRVQVKPNPKMS</sequence>
<protein>
    <recommendedName>
        <fullName>Phosphoenolpyruvate/phosphate translocator 2, chloroplastic</fullName>
        <shortName>AtPPT2</shortName>
    </recommendedName>
</protein>
<accession>Q8H0T6</accession>
<accession>Q8LFI4</accession>
<accession>Q9SSA0</accession>
<organism>
    <name type="scientific">Arabidopsis thaliana</name>
    <name type="common">Mouse-ear cress</name>
    <dbReference type="NCBI Taxonomy" id="3702"/>
    <lineage>
        <taxon>Eukaryota</taxon>
        <taxon>Viridiplantae</taxon>
        <taxon>Streptophyta</taxon>
        <taxon>Embryophyta</taxon>
        <taxon>Tracheophyta</taxon>
        <taxon>Spermatophyta</taxon>
        <taxon>Magnoliopsida</taxon>
        <taxon>eudicotyledons</taxon>
        <taxon>Gunneridae</taxon>
        <taxon>Pentapetalae</taxon>
        <taxon>rosids</taxon>
        <taxon>malvids</taxon>
        <taxon>Brassicales</taxon>
        <taxon>Brassicaceae</taxon>
        <taxon>Camelineae</taxon>
        <taxon>Arabidopsis</taxon>
    </lineage>
</organism>
<comment type="function">
    <text evidence="2">Phosphoenolpyruvate/phosphate translocator that transports phosphoenolpyruvate (PEP), 2-phosphoglycerate and 3-phosphoglycerate.</text>
</comment>
<comment type="subcellular location">
    <subcellularLocation>
        <location evidence="3">Plastid</location>
        <location evidence="3">Chloroplast membrane</location>
        <topology evidence="3">Multi-pass membrane protein</topology>
    </subcellularLocation>
</comment>
<comment type="tissue specificity">
    <text evidence="2">Widely expressed in leaves throughout development. In flowers, expressed in sepals and pistils.</text>
</comment>
<comment type="similarity">
    <text evidence="3">Belongs to the TPT transporter family. PPT (TC 2.A.7.9) subfamily.</text>
</comment>
<comment type="sequence caution" evidence="3">
    <conflict type="erroneous gene model prediction">
        <sequence resource="EMBL-CDS" id="AAF01540"/>
    </conflict>
</comment>
<name>PPT2_ARATH</name>
<reference key="1">
    <citation type="journal article" date="2000" name="Nature">
        <title>Sequence and analysis of chromosome 3 of the plant Arabidopsis thaliana.</title>
        <authorList>
            <person name="Salanoubat M."/>
            <person name="Lemcke K."/>
            <person name="Rieger M."/>
            <person name="Ansorge W."/>
            <person name="Unseld M."/>
            <person name="Fartmann B."/>
            <person name="Valle G."/>
            <person name="Bloecker H."/>
            <person name="Perez-Alonso M."/>
            <person name="Obermaier B."/>
            <person name="Delseny M."/>
            <person name="Boutry M."/>
            <person name="Grivell L.A."/>
            <person name="Mache R."/>
            <person name="Puigdomenech P."/>
            <person name="De Simone V."/>
            <person name="Choisne N."/>
            <person name="Artiguenave F."/>
            <person name="Robert C."/>
            <person name="Brottier P."/>
            <person name="Wincker P."/>
            <person name="Cattolico L."/>
            <person name="Weissenbach J."/>
            <person name="Saurin W."/>
            <person name="Quetier F."/>
            <person name="Schaefer M."/>
            <person name="Mueller-Auer S."/>
            <person name="Gabel C."/>
            <person name="Fuchs M."/>
            <person name="Benes V."/>
            <person name="Wurmbach E."/>
            <person name="Drzonek H."/>
            <person name="Erfle H."/>
            <person name="Jordan N."/>
            <person name="Bangert S."/>
            <person name="Wiedelmann R."/>
            <person name="Kranz H."/>
            <person name="Voss H."/>
            <person name="Holland R."/>
            <person name="Brandt P."/>
            <person name="Nyakatura G."/>
            <person name="Vezzi A."/>
            <person name="D'Angelo M."/>
            <person name="Pallavicini A."/>
            <person name="Toppo S."/>
            <person name="Simionati B."/>
            <person name="Conrad A."/>
            <person name="Hornischer K."/>
            <person name="Kauer G."/>
            <person name="Loehnert T.-H."/>
            <person name="Nordsiek G."/>
            <person name="Reichelt J."/>
            <person name="Scharfe M."/>
            <person name="Schoen O."/>
            <person name="Bargues M."/>
            <person name="Terol J."/>
            <person name="Climent J."/>
            <person name="Navarro P."/>
            <person name="Collado C."/>
            <person name="Perez-Perez A."/>
            <person name="Ottenwaelder B."/>
            <person name="Duchemin D."/>
            <person name="Cooke R."/>
            <person name="Laudie M."/>
            <person name="Berger-Llauro C."/>
            <person name="Purnelle B."/>
            <person name="Masuy D."/>
            <person name="de Haan M."/>
            <person name="Maarse A.C."/>
            <person name="Alcaraz J.-P."/>
            <person name="Cottet A."/>
            <person name="Casacuberta E."/>
            <person name="Monfort A."/>
            <person name="Argiriou A."/>
            <person name="Flores M."/>
            <person name="Liguori R."/>
            <person name="Vitale D."/>
            <person name="Mannhaupt G."/>
            <person name="Haase D."/>
            <person name="Schoof H."/>
            <person name="Rudd S."/>
            <person name="Zaccaria P."/>
            <person name="Mewes H.-W."/>
            <person name="Mayer K.F.X."/>
            <person name="Kaul S."/>
            <person name="Town C.D."/>
            <person name="Koo H.L."/>
            <person name="Tallon L.J."/>
            <person name="Jenkins J."/>
            <person name="Rooney T."/>
            <person name="Rizzo M."/>
            <person name="Walts A."/>
            <person name="Utterback T."/>
            <person name="Fujii C.Y."/>
            <person name="Shea T.P."/>
            <person name="Creasy T.H."/>
            <person name="Haas B."/>
            <person name="Maiti R."/>
            <person name="Wu D."/>
            <person name="Peterson J."/>
            <person name="Van Aken S."/>
            <person name="Pai G."/>
            <person name="Militscher J."/>
            <person name="Sellers P."/>
            <person name="Gill J.E."/>
            <person name="Feldblyum T.V."/>
            <person name="Preuss D."/>
            <person name="Lin X."/>
            <person name="Nierman W.C."/>
            <person name="Salzberg S.L."/>
            <person name="White O."/>
            <person name="Venter J.C."/>
            <person name="Fraser C.M."/>
            <person name="Kaneko T."/>
            <person name="Nakamura Y."/>
            <person name="Sato S."/>
            <person name="Kato T."/>
            <person name="Asamizu E."/>
            <person name="Sasamoto S."/>
            <person name="Kimura T."/>
            <person name="Idesawa K."/>
            <person name="Kawashima K."/>
            <person name="Kishida Y."/>
            <person name="Kiyokawa C."/>
            <person name="Kohara M."/>
            <person name="Matsumoto M."/>
            <person name="Matsuno A."/>
            <person name="Muraki A."/>
            <person name="Nakayama S."/>
            <person name="Nakazaki N."/>
            <person name="Shinpo S."/>
            <person name="Takeuchi C."/>
            <person name="Wada T."/>
            <person name="Watanabe A."/>
            <person name="Yamada M."/>
            <person name="Yasuda M."/>
            <person name="Tabata S."/>
        </authorList>
    </citation>
    <scope>NUCLEOTIDE SEQUENCE [LARGE SCALE GENOMIC DNA]</scope>
    <source>
        <strain>cv. Columbia</strain>
    </source>
</reference>
<reference key="2">
    <citation type="journal article" date="2017" name="Plant J.">
        <title>Araport11: a complete reannotation of the Arabidopsis thaliana reference genome.</title>
        <authorList>
            <person name="Cheng C.Y."/>
            <person name="Krishnakumar V."/>
            <person name="Chan A.P."/>
            <person name="Thibaud-Nissen F."/>
            <person name="Schobel S."/>
            <person name="Town C.D."/>
        </authorList>
    </citation>
    <scope>GENOME REANNOTATION</scope>
    <source>
        <strain>cv. Columbia</strain>
    </source>
</reference>
<reference key="3">
    <citation type="journal article" date="2003" name="Science">
        <title>Empirical analysis of transcriptional activity in the Arabidopsis genome.</title>
        <authorList>
            <person name="Yamada K."/>
            <person name="Lim J."/>
            <person name="Dale J.M."/>
            <person name="Chen H."/>
            <person name="Shinn P."/>
            <person name="Palm C.J."/>
            <person name="Southwick A.M."/>
            <person name="Wu H.C."/>
            <person name="Kim C.J."/>
            <person name="Nguyen M."/>
            <person name="Pham P.K."/>
            <person name="Cheuk R.F."/>
            <person name="Karlin-Newmann G."/>
            <person name="Liu S.X."/>
            <person name="Lam B."/>
            <person name="Sakano H."/>
            <person name="Wu T."/>
            <person name="Yu G."/>
            <person name="Miranda M."/>
            <person name="Quach H.L."/>
            <person name="Tripp M."/>
            <person name="Chang C.H."/>
            <person name="Lee J.M."/>
            <person name="Toriumi M.J."/>
            <person name="Chan M.M."/>
            <person name="Tang C.C."/>
            <person name="Onodera C.S."/>
            <person name="Deng J.M."/>
            <person name="Akiyama K."/>
            <person name="Ansari Y."/>
            <person name="Arakawa T."/>
            <person name="Banh J."/>
            <person name="Banno F."/>
            <person name="Bowser L."/>
            <person name="Brooks S.Y."/>
            <person name="Carninci P."/>
            <person name="Chao Q."/>
            <person name="Choy N."/>
            <person name="Enju A."/>
            <person name="Goldsmith A.D."/>
            <person name="Gurjal M."/>
            <person name="Hansen N.F."/>
            <person name="Hayashizaki Y."/>
            <person name="Johnson-Hopson C."/>
            <person name="Hsuan V.W."/>
            <person name="Iida K."/>
            <person name="Karnes M."/>
            <person name="Khan S."/>
            <person name="Koesema E."/>
            <person name="Ishida J."/>
            <person name="Jiang P.X."/>
            <person name="Jones T."/>
            <person name="Kawai J."/>
            <person name="Kamiya A."/>
            <person name="Meyers C."/>
            <person name="Nakajima M."/>
            <person name="Narusaka M."/>
            <person name="Seki M."/>
            <person name="Sakurai T."/>
            <person name="Satou M."/>
            <person name="Tamse R."/>
            <person name="Vaysberg M."/>
            <person name="Wallender E.K."/>
            <person name="Wong C."/>
            <person name="Yamamura Y."/>
            <person name="Yuan S."/>
            <person name="Shinozaki K."/>
            <person name="Davis R.W."/>
            <person name="Theologis A."/>
            <person name="Ecker J.R."/>
        </authorList>
    </citation>
    <scope>NUCLEOTIDE SEQUENCE [LARGE SCALE MRNA]</scope>
    <source>
        <strain>cv. Columbia</strain>
    </source>
</reference>
<reference key="4">
    <citation type="submission" date="2002-03" db="EMBL/GenBank/DDBJ databases">
        <title>Full-length cDNA from Arabidopsis thaliana.</title>
        <authorList>
            <person name="Brover V.V."/>
            <person name="Troukhan M.E."/>
            <person name="Alexandrov N.A."/>
            <person name="Lu Y.-P."/>
            <person name="Flavell R.B."/>
            <person name="Feldmann K.A."/>
        </authorList>
    </citation>
    <scope>NUCLEOTIDE SEQUENCE [LARGE SCALE MRNA]</scope>
</reference>
<reference key="5">
    <citation type="journal article" date="2003" name="Plant J.">
        <title>Characterization of two functional phosphoenolpyruvate/phosphate translocator (PPT) genes in Arabidopsis--AtPPT1 may be involved in the provision of signals for correct mesophyll development.</title>
        <authorList>
            <person name="Knappe S."/>
            <person name="Loettgert T."/>
            <person name="Schneider A."/>
            <person name="Voll L."/>
            <person name="Fluegge U.I."/>
            <person name="Fischer K."/>
        </authorList>
    </citation>
    <scope>FUNCTION</scope>
    <scope>TISSUE SPECIFICITY</scope>
</reference>
<reference key="6">
    <citation type="journal article" date="2014" name="Proc. Natl. Acad. Sci. U.S.A.">
        <title>The Golgi localized bifunctional UDP-rhamnose/UDP-galactose transporter family of Arabidopsis.</title>
        <authorList>
            <person name="Rautengarten C."/>
            <person name="Ebert B."/>
            <person name="Moreno I."/>
            <person name="Temple H."/>
            <person name="Herter T."/>
            <person name="Link B."/>
            <person name="Donas-Cofre D."/>
            <person name="Moreno A."/>
            <person name="Saez-Aguayo S."/>
            <person name="Blanco F."/>
            <person name="Mortimer J.C."/>
            <person name="Schultink A."/>
            <person name="Reiter W.D."/>
            <person name="Dupree P."/>
            <person name="Pauly M."/>
            <person name="Heazlewood J.L."/>
            <person name="Scheller H.V."/>
            <person name="Orellana A."/>
        </authorList>
    </citation>
    <scope>GENE FAMILY</scope>
</reference>
<feature type="transit peptide" description="Chloroplast" evidence="1">
    <location>
        <begin position="1"/>
        <end position="55"/>
    </location>
</feature>
<feature type="chain" id="PRO_0000406100" description="Phosphoenolpyruvate/phosphate translocator 2, chloroplastic">
    <location>
        <begin position="56"/>
        <end position="383"/>
    </location>
</feature>
<feature type="transmembrane region" description="Helical" evidence="1">
    <location>
        <begin position="76"/>
        <end position="96"/>
    </location>
</feature>
<feature type="transmembrane region" description="Helical" evidence="1">
    <location>
        <begin position="108"/>
        <end position="128"/>
    </location>
</feature>
<feature type="transmembrane region" description="Helical" evidence="1">
    <location>
        <begin position="143"/>
        <end position="163"/>
    </location>
</feature>
<feature type="transmembrane region" description="Helical" evidence="1">
    <location>
        <begin position="179"/>
        <end position="199"/>
    </location>
</feature>
<feature type="transmembrane region" description="Helical" evidence="1">
    <location>
        <begin position="210"/>
        <end position="232"/>
    </location>
</feature>
<feature type="transmembrane region" description="Helical" evidence="1">
    <location>
        <begin position="253"/>
        <end position="273"/>
    </location>
</feature>
<feature type="transmembrane region" description="Helical" evidence="1">
    <location>
        <begin position="299"/>
        <end position="319"/>
    </location>
</feature>
<feature type="transmembrane region" description="Helical" evidence="1">
    <location>
        <begin position="350"/>
        <end position="369"/>
    </location>
</feature>
<feature type="domain" description="EamA">
    <location>
        <begin position="93"/>
        <end position="212"/>
    </location>
</feature>
<feature type="sequence conflict" description="In Ref. 4; AAM61391." evidence="3" ref="4">
    <location>
        <position position="29"/>
    </location>
</feature>
<evidence type="ECO:0000255" key="1"/>
<evidence type="ECO:0000269" key="2">
    <source>
    </source>
</evidence>
<evidence type="ECO:0000305" key="3"/>
<keyword id="KW-0150">Chloroplast</keyword>
<keyword id="KW-0472">Membrane</keyword>
<keyword id="KW-0934">Plastid</keyword>
<keyword id="KW-0670">Pyruvate</keyword>
<keyword id="KW-1185">Reference proteome</keyword>
<keyword id="KW-0762">Sugar transport</keyword>
<keyword id="KW-0809">Transit peptide</keyword>
<keyword id="KW-0812">Transmembrane</keyword>
<keyword id="KW-1133">Transmembrane helix</keyword>
<keyword id="KW-0813">Transport</keyword>